<protein>
    <recommendedName>
        <fullName evidence="13">Mineralization regulator ANKH</fullName>
    </recommendedName>
    <alternativeName>
        <fullName evidence="16">ATP carrier protein ANKH</fullName>
    </alternativeName>
    <alternativeName>
        <fullName>Progressive ankylosis protein homolog</fullName>
        <shortName evidence="11">ANK</shortName>
    </alternativeName>
</protein>
<accession>Q9HCJ1</accession>
<accession>B2RCA7</accession>
<accession>B3KMG4</accession>
<accession>D3DTD4</accession>
<accession>Q9NQW2</accession>
<sequence>MVKFPALTHYWPLIRFLVPLGITNIAIDFGEQALNRGIAAVKEDAVEMLASYGLAYSLMKFFTGPMSDFKNVGLVFVNSKRDRTKAVLCMVVAGAIAAVFHTLIAYSDLGYYIINKLHHVDESVGSKTRRAFLYLAAFPFMDAMAWTHAGILLKHKYSFLVGCASISDVIAQVVFVAILLHSHLECREPLLIPILSLYMGALVRCTTLCLGYYKNIHDIIPDRSGPELGGDATIRKMLSFWWPLALILATQRISRPIVNLFVSRDLGGSSAATEAVAILTATYPVGHMPYGWLTEIRAVYPAFDKNNPSNKLVSTSNTVTAAHIKKFTFVCMALSLTLCFVMFWTPNVSEKILIDIIGVDFAFAELCVVPLRIFSFFPVPVTVRAHLTGWLMTLKKTFVLAPSSVLRIIVLIASLVVLPYLGVHGATLGVGSLLAGFVGESTMVAIAACYVYRKQKKKMENESATEGEDSAMTDMPPTEEVTDIVEMREENE</sequence>
<gene>
    <name evidence="13 17" type="primary">ANKH</name>
    <name type="synonym">KIAA1581</name>
    <name type="ORF">UNQ241/PRO274</name>
</gene>
<evidence type="ECO:0000255" key="1"/>
<evidence type="ECO:0000256" key="2">
    <source>
        <dbReference type="SAM" id="MobiDB-lite"/>
    </source>
</evidence>
<evidence type="ECO:0000269" key="3">
    <source>
    </source>
</evidence>
<evidence type="ECO:0000269" key="4">
    <source>
    </source>
</evidence>
<evidence type="ECO:0000269" key="5">
    <source>
    </source>
</evidence>
<evidence type="ECO:0000269" key="6">
    <source>
    </source>
</evidence>
<evidence type="ECO:0000269" key="7">
    <source>
    </source>
</evidence>
<evidence type="ECO:0000269" key="8">
    <source>
    </source>
</evidence>
<evidence type="ECO:0000269" key="9">
    <source>
    </source>
</evidence>
<evidence type="ECO:0000269" key="10">
    <source>
    </source>
</evidence>
<evidence type="ECO:0000303" key="11">
    <source>
    </source>
</evidence>
<evidence type="ECO:0000303" key="12">
    <source>
    </source>
</evidence>
<evidence type="ECO:0000303" key="13">
    <source>
    </source>
</evidence>
<evidence type="ECO:0000305" key="14"/>
<evidence type="ECO:0000305" key="15">
    <source>
    </source>
</evidence>
<evidence type="ECO:0000305" key="16">
    <source>
    </source>
</evidence>
<evidence type="ECO:0000312" key="17">
    <source>
        <dbReference type="HGNC" id="HGNC:15492"/>
    </source>
</evidence>
<dbReference type="EMBL" id="AF274753">
    <property type="protein sequence ID" value="AAF88039.1"/>
    <property type="molecule type" value="mRNA"/>
</dbReference>
<dbReference type="EMBL" id="AB046801">
    <property type="protein sequence ID" value="BAB13407.1"/>
    <property type="status" value="ALT_INIT"/>
    <property type="molecule type" value="mRNA"/>
</dbReference>
<dbReference type="EMBL" id="AY358503">
    <property type="protein sequence ID" value="AAQ88867.1"/>
    <property type="molecule type" value="mRNA"/>
</dbReference>
<dbReference type="EMBL" id="AK001799">
    <property type="protein sequence ID" value="BAG50976.1"/>
    <property type="molecule type" value="mRNA"/>
</dbReference>
<dbReference type="EMBL" id="AC010491">
    <property type="status" value="NOT_ANNOTATED_CDS"/>
    <property type="molecule type" value="Genomic_DNA"/>
</dbReference>
<dbReference type="EMBL" id="AC016575">
    <property type="status" value="NOT_ANNOTATED_CDS"/>
    <property type="molecule type" value="Genomic_DNA"/>
</dbReference>
<dbReference type="EMBL" id="AC025456">
    <property type="status" value="NOT_ANNOTATED_CDS"/>
    <property type="molecule type" value="Genomic_DNA"/>
</dbReference>
<dbReference type="EMBL" id="AK315012">
    <property type="protein sequence ID" value="BAG37504.1"/>
    <property type="molecule type" value="mRNA"/>
</dbReference>
<dbReference type="EMBL" id="CH471102">
    <property type="protein sequence ID" value="EAX08034.1"/>
    <property type="molecule type" value="Genomic_DNA"/>
</dbReference>
<dbReference type="EMBL" id="CH471102">
    <property type="protein sequence ID" value="EAX08035.1"/>
    <property type="molecule type" value="Genomic_DNA"/>
</dbReference>
<dbReference type="EMBL" id="BC009835">
    <property type="protein sequence ID" value="AAH09835.1"/>
    <property type="molecule type" value="mRNA"/>
</dbReference>
<dbReference type="EMBL" id="BC014526">
    <property type="protein sequence ID" value="AAH14526.1"/>
    <property type="molecule type" value="mRNA"/>
</dbReference>
<dbReference type="CCDS" id="CCDS3885.1">
    <molecule id="Q9HCJ1-1"/>
</dbReference>
<dbReference type="RefSeq" id="NP_473368.1">
    <molecule id="Q9HCJ1-1"/>
    <property type="nucleotide sequence ID" value="NM_054027.6"/>
</dbReference>
<dbReference type="SMR" id="Q9HCJ1"/>
<dbReference type="BioGRID" id="121103">
    <property type="interactions" value="16"/>
</dbReference>
<dbReference type="FunCoup" id="Q9HCJ1">
    <property type="interactions" value="416"/>
</dbReference>
<dbReference type="IntAct" id="Q9HCJ1">
    <property type="interactions" value="8"/>
</dbReference>
<dbReference type="STRING" id="9606.ENSP00000284268"/>
<dbReference type="TCDB" id="2.A.66.9.1">
    <property type="family name" value="the multidrug/oligosaccharidyl-lipid/polysaccharide (mop) flippase superfamily"/>
</dbReference>
<dbReference type="iPTMnet" id="Q9HCJ1"/>
<dbReference type="PhosphoSitePlus" id="Q9HCJ1"/>
<dbReference type="SwissPalm" id="Q9HCJ1"/>
<dbReference type="BioMuta" id="ANKH"/>
<dbReference type="DMDM" id="17366849"/>
<dbReference type="jPOST" id="Q9HCJ1"/>
<dbReference type="MassIVE" id="Q9HCJ1"/>
<dbReference type="PaxDb" id="9606-ENSP00000284268"/>
<dbReference type="PeptideAtlas" id="Q9HCJ1"/>
<dbReference type="ProteomicsDB" id="3485"/>
<dbReference type="ProteomicsDB" id="81736">
    <molecule id="Q9HCJ1-1"/>
</dbReference>
<dbReference type="Pumba" id="Q9HCJ1"/>
<dbReference type="Antibodypedia" id="43269">
    <property type="antibodies" value="118 antibodies from 26 providers"/>
</dbReference>
<dbReference type="DNASU" id="56172"/>
<dbReference type="Ensembl" id="ENST00000284268.8">
    <molecule id="Q9HCJ1-1"/>
    <property type="protein sequence ID" value="ENSP00000284268.6"/>
    <property type="gene ID" value="ENSG00000154122.14"/>
</dbReference>
<dbReference type="GeneID" id="56172"/>
<dbReference type="KEGG" id="hsa:56172"/>
<dbReference type="MANE-Select" id="ENST00000284268.8">
    <property type="protein sequence ID" value="ENSP00000284268.6"/>
    <property type="RefSeq nucleotide sequence ID" value="NM_054027.6"/>
    <property type="RefSeq protein sequence ID" value="NP_473368.1"/>
</dbReference>
<dbReference type="UCSC" id="uc003jfm.5">
    <molecule id="Q9HCJ1-1"/>
    <property type="organism name" value="human"/>
</dbReference>
<dbReference type="AGR" id="HGNC:15492"/>
<dbReference type="CTD" id="56172"/>
<dbReference type="DisGeNET" id="56172"/>
<dbReference type="GeneCards" id="ANKH"/>
<dbReference type="GeneReviews" id="ANKH"/>
<dbReference type="HGNC" id="HGNC:15492">
    <property type="gene designation" value="ANKH"/>
</dbReference>
<dbReference type="HPA" id="ENSG00000154122">
    <property type="expression patterns" value="Low tissue specificity"/>
</dbReference>
<dbReference type="MalaCards" id="ANKH"/>
<dbReference type="MIM" id="118600">
    <property type="type" value="phenotype"/>
</dbReference>
<dbReference type="MIM" id="123000">
    <property type="type" value="phenotype"/>
</dbReference>
<dbReference type="MIM" id="605145">
    <property type="type" value="gene"/>
</dbReference>
<dbReference type="neXtProt" id="NX_Q9HCJ1"/>
<dbReference type="NIAGADS" id="ENSG00000154122"/>
<dbReference type="OpenTargets" id="ENSG00000154122"/>
<dbReference type="Orphanet" id="1522">
    <property type="disease" value="Craniometaphyseal dysplasia"/>
</dbReference>
<dbReference type="Orphanet" id="1416">
    <property type="disease" value="Familial calcium pyrophosphate deposition"/>
</dbReference>
<dbReference type="PharmGKB" id="PA24801"/>
<dbReference type="VEuPathDB" id="HostDB:ENSG00000154122"/>
<dbReference type="eggNOG" id="ENOG502QWCU">
    <property type="taxonomic scope" value="Eukaryota"/>
</dbReference>
<dbReference type="GeneTree" id="ENSGT00390000012189"/>
<dbReference type="HOGENOM" id="CLU_044298_0_0_1"/>
<dbReference type="InParanoid" id="Q9HCJ1"/>
<dbReference type="OMA" id="FYQGILI"/>
<dbReference type="OrthoDB" id="10055429at2759"/>
<dbReference type="PAN-GO" id="Q9HCJ1">
    <property type="GO annotations" value="3 GO annotations based on evolutionary models"/>
</dbReference>
<dbReference type="PhylomeDB" id="Q9HCJ1"/>
<dbReference type="TreeFam" id="TF333504"/>
<dbReference type="PathwayCommons" id="Q9HCJ1"/>
<dbReference type="Reactome" id="R-HSA-5223345">
    <property type="pathway name" value="Miscellaneous transport and binding events"/>
</dbReference>
<dbReference type="SignaLink" id="Q9HCJ1"/>
<dbReference type="SIGNOR" id="Q9HCJ1"/>
<dbReference type="BioGRID-ORCS" id="56172">
    <property type="hits" value="23 hits in 1162 CRISPR screens"/>
</dbReference>
<dbReference type="ChiTaRS" id="ANKH">
    <property type="organism name" value="human"/>
</dbReference>
<dbReference type="GeneWiki" id="ANKH"/>
<dbReference type="GenomeRNAi" id="56172"/>
<dbReference type="Pharos" id="Q9HCJ1">
    <property type="development level" value="Tbio"/>
</dbReference>
<dbReference type="PRO" id="PR:Q9HCJ1"/>
<dbReference type="Proteomes" id="UP000005640">
    <property type="component" value="Chromosome 5"/>
</dbReference>
<dbReference type="RNAct" id="Q9HCJ1">
    <property type="molecule type" value="protein"/>
</dbReference>
<dbReference type="Bgee" id="ENSG00000154122">
    <property type="expression patterns" value="Expressed in tibia and 182 other cell types or tissues"/>
</dbReference>
<dbReference type="ExpressionAtlas" id="Q9HCJ1">
    <property type="expression patterns" value="baseline and differential"/>
</dbReference>
<dbReference type="GO" id="GO:0005576">
    <property type="term" value="C:extracellular region"/>
    <property type="evidence" value="ECO:0007669"/>
    <property type="project" value="Ensembl"/>
</dbReference>
<dbReference type="GO" id="GO:0016020">
    <property type="term" value="C:membrane"/>
    <property type="evidence" value="ECO:0000314"/>
    <property type="project" value="UniProtKB"/>
</dbReference>
<dbReference type="GO" id="GO:0019867">
    <property type="term" value="C:outer membrane"/>
    <property type="evidence" value="ECO:0000304"/>
    <property type="project" value="UniProtKB"/>
</dbReference>
<dbReference type="GO" id="GO:0005886">
    <property type="term" value="C:plasma membrane"/>
    <property type="evidence" value="ECO:0000314"/>
    <property type="project" value="UniProtKB"/>
</dbReference>
<dbReference type="GO" id="GO:0005347">
    <property type="term" value="F:ATP transmembrane transporter activity"/>
    <property type="evidence" value="ECO:0000314"/>
    <property type="project" value="UniProtKB"/>
</dbReference>
<dbReference type="GO" id="GO:0030504">
    <property type="term" value="F:inorganic diphosphate transmembrane transporter activity"/>
    <property type="evidence" value="ECO:0000314"/>
    <property type="project" value="UniProtKB"/>
</dbReference>
<dbReference type="GO" id="GO:0005315">
    <property type="term" value="F:phosphate transmembrane transporter activity"/>
    <property type="evidence" value="ECO:0000314"/>
    <property type="project" value="UniProtKB"/>
</dbReference>
<dbReference type="GO" id="GO:1904669">
    <property type="term" value="P:ATP export"/>
    <property type="evidence" value="ECO:0000315"/>
    <property type="project" value="UniProtKB"/>
</dbReference>
<dbReference type="GO" id="GO:0030282">
    <property type="term" value="P:bone mineralization"/>
    <property type="evidence" value="ECO:0007669"/>
    <property type="project" value="Ensembl"/>
</dbReference>
<dbReference type="GO" id="GO:0055074">
    <property type="term" value="P:calcium ion homeostasis"/>
    <property type="evidence" value="ECO:0007669"/>
    <property type="project" value="Ensembl"/>
</dbReference>
<dbReference type="GO" id="GO:0071529">
    <property type="term" value="P:cementum mineralization"/>
    <property type="evidence" value="ECO:0007669"/>
    <property type="project" value="Ensembl"/>
</dbReference>
<dbReference type="GO" id="GO:0071344">
    <property type="term" value="P:diphosphate metabolic process"/>
    <property type="evidence" value="ECO:0007669"/>
    <property type="project" value="Ensembl"/>
</dbReference>
<dbReference type="GO" id="GO:0010467">
    <property type="term" value="P:gene expression"/>
    <property type="evidence" value="ECO:0007669"/>
    <property type="project" value="Ensembl"/>
</dbReference>
<dbReference type="GO" id="GO:0140928">
    <property type="term" value="P:inhibition of non-skeletal tissue mineralization"/>
    <property type="evidence" value="ECO:0007669"/>
    <property type="project" value="Ensembl"/>
</dbReference>
<dbReference type="GO" id="GO:0007626">
    <property type="term" value="P:locomotory behavior"/>
    <property type="evidence" value="ECO:0000303"/>
    <property type="project" value="UniProtKB"/>
</dbReference>
<dbReference type="GO" id="GO:0046716">
    <property type="term" value="P:muscle cell cellular homeostasis"/>
    <property type="evidence" value="ECO:0007669"/>
    <property type="project" value="Ensembl"/>
</dbReference>
<dbReference type="GO" id="GO:0055062">
    <property type="term" value="P:phosphate ion homeostasis"/>
    <property type="evidence" value="ECO:0007669"/>
    <property type="project" value="Ensembl"/>
</dbReference>
<dbReference type="GO" id="GO:0035435">
    <property type="term" value="P:phosphate ion transmembrane transport"/>
    <property type="evidence" value="ECO:0007669"/>
    <property type="project" value="InterPro"/>
</dbReference>
<dbReference type="GO" id="GO:0030500">
    <property type="term" value="P:regulation of bone mineralization"/>
    <property type="evidence" value="ECO:0000250"/>
    <property type="project" value="UniProtKB"/>
</dbReference>
<dbReference type="GO" id="GO:1904383">
    <property type="term" value="P:response to sodium phosphate"/>
    <property type="evidence" value="ECO:0007669"/>
    <property type="project" value="Ensembl"/>
</dbReference>
<dbReference type="GO" id="GO:0001501">
    <property type="term" value="P:skeletal system development"/>
    <property type="evidence" value="ECO:0000303"/>
    <property type="project" value="UniProtKB"/>
</dbReference>
<dbReference type="GO" id="GO:0055085">
    <property type="term" value="P:transmembrane transport"/>
    <property type="evidence" value="ECO:0000304"/>
    <property type="project" value="Reactome"/>
</dbReference>
<dbReference type="InterPro" id="IPR009887">
    <property type="entry name" value="ANKH"/>
</dbReference>
<dbReference type="PANTHER" id="PTHR28384">
    <property type="entry name" value="PROGRESSIVE ANKYLOSIS PROTEIN HOMOLOG"/>
    <property type="match status" value="1"/>
</dbReference>
<dbReference type="PANTHER" id="PTHR28384:SF1">
    <property type="entry name" value="PROGRESSIVE ANKYLOSIS PROTEIN HOMOLOG"/>
    <property type="match status" value="1"/>
</dbReference>
<dbReference type="Pfam" id="PF07260">
    <property type="entry name" value="ANKH"/>
    <property type="match status" value="1"/>
</dbReference>
<reference key="1">
    <citation type="journal article" date="2000" name="Science">
        <title>Role of the mouse ank gene in control of tissue calcification and arthritis.</title>
        <authorList>
            <person name="Ho A.M."/>
            <person name="Johnson M.D."/>
            <person name="Kingsley D.M."/>
        </authorList>
    </citation>
    <scope>NUCLEOTIDE SEQUENCE [MRNA] (ISOFORM 1)</scope>
</reference>
<reference key="2">
    <citation type="journal article" date="2000" name="DNA Res.">
        <title>Prediction of the coding sequences of unidentified human genes. XVIII. The complete sequences of 100 new cDNA clones from brain which code for large proteins in vitro.</title>
        <authorList>
            <person name="Nagase T."/>
            <person name="Kikuno R."/>
            <person name="Nakayama M."/>
            <person name="Hirosawa M."/>
            <person name="Ohara O."/>
        </authorList>
    </citation>
    <scope>NUCLEOTIDE SEQUENCE [LARGE SCALE MRNA] (ISOFORM 1)</scope>
    <source>
        <tissue>Brain</tissue>
    </source>
</reference>
<reference key="3">
    <citation type="journal article" date="2003" name="Genome Res.">
        <title>The secreted protein discovery initiative (SPDI), a large-scale effort to identify novel human secreted and transmembrane proteins: a bioinformatics assessment.</title>
        <authorList>
            <person name="Clark H.F."/>
            <person name="Gurney A.L."/>
            <person name="Abaya E."/>
            <person name="Baker K."/>
            <person name="Baldwin D.T."/>
            <person name="Brush J."/>
            <person name="Chen J."/>
            <person name="Chow B."/>
            <person name="Chui C."/>
            <person name="Crowley C."/>
            <person name="Currell B."/>
            <person name="Deuel B."/>
            <person name="Dowd P."/>
            <person name="Eaton D."/>
            <person name="Foster J.S."/>
            <person name="Grimaldi C."/>
            <person name="Gu Q."/>
            <person name="Hass P.E."/>
            <person name="Heldens S."/>
            <person name="Huang A."/>
            <person name="Kim H.S."/>
            <person name="Klimowski L."/>
            <person name="Jin Y."/>
            <person name="Johnson S."/>
            <person name="Lee J."/>
            <person name="Lewis L."/>
            <person name="Liao D."/>
            <person name="Mark M.R."/>
            <person name="Robbie E."/>
            <person name="Sanchez C."/>
            <person name="Schoenfeld J."/>
            <person name="Seshagiri S."/>
            <person name="Simmons L."/>
            <person name="Singh J."/>
            <person name="Smith V."/>
            <person name="Stinson J."/>
            <person name="Vagts A."/>
            <person name="Vandlen R.L."/>
            <person name="Watanabe C."/>
            <person name="Wieand D."/>
            <person name="Woods K."/>
            <person name="Xie M.-H."/>
            <person name="Yansura D.G."/>
            <person name="Yi S."/>
            <person name="Yu G."/>
            <person name="Yuan J."/>
            <person name="Zhang M."/>
            <person name="Zhang Z."/>
            <person name="Goddard A.D."/>
            <person name="Wood W.I."/>
            <person name="Godowski P.J."/>
            <person name="Gray A.M."/>
        </authorList>
    </citation>
    <scope>NUCLEOTIDE SEQUENCE [LARGE SCALE MRNA] (ISOFORM 1)</scope>
</reference>
<reference key="4">
    <citation type="journal article" date="2004" name="Nat. Genet.">
        <title>Complete sequencing and characterization of 21,243 full-length human cDNAs.</title>
        <authorList>
            <person name="Ota T."/>
            <person name="Suzuki Y."/>
            <person name="Nishikawa T."/>
            <person name="Otsuki T."/>
            <person name="Sugiyama T."/>
            <person name="Irie R."/>
            <person name="Wakamatsu A."/>
            <person name="Hayashi K."/>
            <person name="Sato H."/>
            <person name="Nagai K."/>
            <person name="Kimura K."/>
            <person name="Makita H."/>
            <person name="Sekine M."/>
            <person name="Obayashi M."/>
            <person name="Nishi T."/>
            <person name="Shibahara T."/>
            <person name="Tanaka T."/>
            <person name="Ishii S."/>
            <person name="Yamamoto J."/>
            <person name="Saito K."/>
            <person name="Kawai Y."/>
            <person name="Isono Y."/>
            <person name="Nakamura Y."/>
            <person name="Nagahari K."/>
            <person name="Murakami K."/>
            <person name="Yasuda T."/>
            <person name="Iwayanagi T."/>
            <person name="Wagatsuma M."/>
            <person name="Shiratori A."/>
            <person name="Sudo H."/>
            <person name="Hosoiri T."/>
            <person name="Kaku Y."/>
            <person name="Kodaira H."/>
            <person name="Kondo H."/>
            <person name="Sugawara M."/>
            <person name="Takahashi M."/>
            <person name="Kanda K."/>
            <person name="Yokoi T."/>
            <person name="Furuya T."/>
            <person name="Kikkawa E."/>
            <person name="Omura Y."/>
            <person name="Abe K."/>
            <person name="Kamihara K."/>
            <person name="Katsuta N."/>
            <person name="Sato K."/>
            <person name="Tanikawa M."/>
            <person name="Yamazaki M."/>
            <person name="Ninomiya K."/>
            <person name="Ishibashi T."/>
            <person name="Yamashita H."/>
            <person name="Murakawa K."/>
            <person name="Fujimori K."/>
            <person name="Tanai H."/>
            <person name="Kimata M."/>
            <person name="Watanabe M."/>
            <person name="Hiraoka S."/>
            <person name="Chiba Y."/>
            <person name="Ishida S."/>
            <person name="Ono Y."/>
            <person name="Takiguchi S."/>
            <person name="Watanabe S."/>
            <person name="Yosida M."/>
            <person name="Hotuta T."/>
            <person name="Kusano J."/>
            <person name="Kanehori K."/>
            <person name="Takahashi-Fujii A."/>
            <person name="Hara H."/>
            <person name="Tanase T.-O."/>
            <person name="Nomura Y."/>
            <person name="Togiya S."/>
            <person name="Komai F."/>
            <person name="Hara R."/>
            <person name="Takeuchi K."/>
            <person name="Arita M."/>
            <person name="Imose N."/>
            <person name="Musashino K."/>
            <person name="Yuuki H."/>
            <person name="Oshima A."/>
            <person name="Sasaki N."/>
            <person name="Aotsuka S."/>
            <person name="Yoshikawa Y."/>
            <person name="Matsunawa H."/>
            <person name="Ichihara T."/>
            <person name="Shiohata N."/>
            <person name="Sano S."/>
            <person name="Moriya S."/>
            <person name="Momiyama H."/>
            <person name="Satoh N."/>
            <person name="Takami S."/>
            <person name="Terashima Y."/>
            <person name="Suzuki O."/>
            <person name="Nakagawa S."/>
            <person name="Senoh A."/>
            <person name="Mizoguchi H."/>
            <person name="Goto Y."/>
            <person name="Shimizu F."/>
            <person name="Wakebe H."/>
            <person name="Hishigaki H."/>
            <person name="Watanabe T."/>
            <person name="Sugiyama A."/>
            <person name="Takemoto M."/>
            <person name="Kawakami B."/>
            <person name="Yamazaki M."/>
            <person name="Watanabe K."/>
            <person name="Kumagai A."/>
            <person name="Itakura S."/>
            <person name="Fukuzumi Y."/>
            <person name="Fujimori Y."/>
            <person name="Komiyama M."/>
            <person name="Tashiro H."/>
            <person name="Tanigami A."/>
            <person name="Fujiwara T."/>
            <person name="Ono T."/>
            <person name="Yamada K."/>
            <person name="Fujii Y."/>
            <person name="Ozaki K."/>
            <person name="Hirao M."/>
            <person name="Ohmori Y."/>
            <person name="Kawabata A."/>
            <person name="Hikiji T."/>
            <person name="Kobatake N."/>
            <person name="Inagaki H."/>
            <person name="Ikema Y."/>
            <person name="Okamoto S."/>
            <person name="Okitani R."/>
            <person name="Kawakami T."/>
            <person name="Noguchi S."/>
            <person name="Itoh T."/>
            <person name="Shigeta K."/>
            <person name="Senba T."/>
            <person name="Matsumura K."/>
            <person name="Nakajima Y."/>
            <person name="Mizuno T."/>
            <person name="Morinaga M."/>
            <person name="Sasaki M."/>
            <person name="Togashi T."/>
            <person name="Oyama M."/>
            <person name="Hata H."/>
            <person name="Watanabe M."/>
            <person name="Komatsu T."/>
            <person name="Mizushima-Sugano J."/>
            <person name="Satoh T."/>
            <person name="Shirai Y."/>
            <person name="Takahashi Y."/>
            <person name="Nakagawa K."/>
            <person name="Okumura K."/>
            <person name="Nagase T."/>
            <person name="Nomura N."/>
            <person name="Kikuchi H."/>
            <person name="Masuho Y."/>
            <person name="Yamashita R."/>
            <person name="Nakai K."/>
            <person name="Yada T."/>
            <person name="Nakamura Y."/>
            <person name="Ohara O."/>
            <person name="Isogai T."/>
            <person name="Sugano S."/>
        </authorList>
    </citation>
    <scope>NUCLEOTIDE SEQUENCE [LARGE SCALE MRNA] (ISOFORMS 1 AND 2)</scope>
    <source>
        <tissue>Cerebellum</tissue>
        <tissue>Ovarian cancer</tissue>
    </source>
</reference>
<reference key="5">
    <citation type="journal article" date="2004" name="Nature">
        <title>The DNA sequence and comparative analysis of human chromosome 5.</title>
        <authorList>
            <person name="Schmutz J."/>
            <person name="Martin J."/>
            <person name="Terry A."/>
            <person name="Couronne O."/>
            <person name="Grimwood J."/>
            <person name="Lowry S."/>
            <person name="Gordon L.A."/>
            <person name="Scott D."/>
            <person name="Xie G."/>
            <person name="Huang W."/>
            <person name="Hellsten U."/>
            <person name="Tran-Gyamfi M."/>
            <person name="She X."/>
            <person name="Prabhakar S."/>
            <person name="Aerts A."/>
            <person name="Altherr M."/>
            <person name="Bajorek E."/>
            <person name="Black S."/>
            <person name="Branscomb E."/>
            <person name="Caoile C."/>
            <person name="Challacombe J.F."/>
            <person name="Chan Y.M."/>
            <person name="Denys M."/>
            <person name="Detter J.C."/>
            <person name="Escobar J."/>
            <person name="Flowers D."/>
            <person name="Fotopulos D."/>
            <person name="Glavina T."/>
            <person name="Gomez M."/>
            <person name="Gonzales E."/>
            <person name="Goodstein D."/>
            <person name="Grigoriev I."/>
            <person name="Groza M."/>
            <person name="Hammon N."/>
            <person name="Hawkins T."/>
            <person name="Haydu L."/>
            <person name="Israni S."/>
            <person name="Jett J."/>
            <person name="Kadner K."/>
            <person name="Kimball H."/>
            <person name="Kobayashi A."/>
            <person name="Lopez F."/>
            <person name="Lou Y."/>
            <person name="Martinez D."/>
            <person name="Medina C."/>
            <person name="Morgan J."/>
            <person name="Nandkeshwar R."/>
            <person name="Noonan J.P."/>
            <person name="Pitluck S."/>
            <person name="Pollard M."/>
            <person name="Predki P."/>
            <person name="Priest J."/>
            <person name="Ramirez L."/>
            <person name="Retterer J."/>
            <person name="Rodriguez A."/>
            <person name="Rogers S."/>
            <person name="Salamov A."/>
            <person name="Salazar A."/>
            <person name="Thayer N."/>
            <person name="Tice H."/>
            <person name="Tsai M."/>
            <person name="Ustaszewska A."/>
            <person name="Vo N."/>
            <person name="Wheeler J."/>
            <person name="Wu K."/>
            <person name="Yang J."/>
            <person name="Dickson M."/>
            <person name="Cheng J.-F."/>
            <person name="Eichler E.E."/>
            <person name="Olsen A."/>
            <person name="Pennacchio L.A."/>
            <person name="Rokhsar D.S."/>
            <person name="Richardson P."/>
            <person name="Lucas S.M."/>
            <person name="Myers R.M."/>
            <person name="Rubin E.M."/>
        </authorList>
    </citation>
    <scope>NUCLEOTIDE SEQUENCE [LARGE SCALE GENOMIC DNA]</scope>
</reference>
<reference key="6">
    <citation type="submission" date="2005-09" db="EMBL/GenBank/DDBJ databases">
        <authorList>
            <person name="Mural R.J."/>
            <person name="Istrail S."/>
            <person name="Sutton G.G."/>
            <person name="Florea L."/>
            <person name="Halpern A.L."/>
            <person name="Mobarry C.M."/>
            <person name="Lippert R."/>
            <person name="Walenz B."/>
            <person name="Shatkay H."/>
            <person name="Dew I."/>
            <person name="Miller J.R."/>
            <person name="Flanigan M.J."/>
            <person name="Edwards N.J."/>
            <person name="Bolanos R."/>
            <person name="Fasulo D."/>
            <person name="Halldorsson B.V."/>
            <person name="Hannenhalli S."/>
            <person name="Turner R."/>
            <person name="Yooseph S."/>
            <person name="Lu F."/>
            <person name="Nusskern D.R."/>
            <person name="Shue B.C."/>
            <person name="Zheng X.H."/>
            <person name="Zhong F."/>
            <person name="Delcher A.L."/>
            <person name="Huson D.H."/>
            <person name="Kravitz S.A."/>
            <person name="Mouchard L."/>
            <person name="Reinert K."/>
            <person name="Remington K.A."/>
            <person name="Clark A.G."/>
            <person name="Waterman M.S."/>
            <person name="Eichler E.E."/>
            <person name="Adams M.D."/>
            <person name="Hunkapiller M.W."/>
            <person name="Myers E.W."/>
            <person name="Venter J.C."/>
        </authorList>
    </citation>
    <scope>NUCLEOTIDE SEQUENCE [LARGE SCALE GENOMIC DNA]</scope>
</reference>
<reference key="7">
    <citation type="journal article" date="2004" name="Genome Res.">
        <title>The status, quality, and expansion of the NIH full-length cDNA project: the Mammalian Gene Collection (MGC).</title>
        <authorList>
            <consortium name="The MGC Project Team"/>
        </authorList>
    </citation>
    <scope>NUCLEOTIDE SEQUENCE [LARGE SCALE MRNA] (ISOFORM 1)</scope>
    <source>
        <tissue>Ovary</tissue>
    </source>
</reference>
<reference key="8">
    <citation type="journal article" date="2020" name="PLoS Genet.">
        <title>The membrane protein ANKH is crucial for bone mechanical performance by mediating cellular export of citrate and ATP.</title>
        <authorList>
            <person name="Szeri F."/>
            <person name="Lundkvist S."/>
            <person name="Donnelly S."/>
            <person name="Engelke U.F.H."/>
            <person name="Rhee K."/>
            <person name="Williams C.J."/>
            <person name="Sundberg J.P."/>
            <person name="Wevers R.A."/>
            <person name="Tomlinson R.E."/>
            <person name="Jansen R.S."/>
            <person name="van de Wetering K."/>
        </authorList>
    </citation>
    <scope>FUNCTION</scope>
    <scope>TRANSPORTER ACTIVITY</scope>
    <scope>CHARACTERIZATION OF VARIANT SER-244</scope>
</reference>
<reference key="9">
    <citation type="journal article" date="2022" name="J. Bone Miner. Res.">
        <title>The Mineralization Regulator ANKH Mediates Cellular Efflux of ATP, Not Pyrophosphate.</title>
        <authorList>
            <person name="Szeri F."/>
            <person name="Niaziorimi F."/>
            <person name="Donnelly S."/>
            <person name="Fariha N."/>
            <person name="Tertyshnaia M."/>
            <person name="Patel D."/>
            <person name="Lundkvist S."/>
            <person name="van de Wetering K."/>
        </authorList>
    </citation>
    <scope>FUNCTION</scope>
    <scope>TRANSPORTER ACTIVITY</scope>
    <scope>CHARACTERIZATION OF VARIANT SER-244</scope>
</reference>
<reference key="10">
    <citation type="journal article" date="2001" name="Am. J. Hum. Genet.">
        <title>Autosomal dominant craniometaphyseal dysplasia is caused by mutations in the transmembrane protein ANK.</title>
        <authorList>
            <person name="Reichenberger E."/>
            <person name="Tiziani V."/>
            <person name="Watanabe S."/>
            <person name="Park L."/>
            <person name="Ueki Y."/>
            <person name="Santanna C."/>
            <person name="Baur S.T."/>
            <person name="Shiang R."/>
            <person name="Grange D.K."/>
            <person name="Beighton P."/>
            <person name="Gardner J."/>
            <person name="Hamersma H."/>
            <person name="Sellars S."/>
            <person name="Ramesar R."/>
            <person name="Lidral A.C."/>
            <person name="Sommer A."/>
            <person name="Raposo do Amaral C.M."/>
            <person name="Gorlin R.J."/>
            <person name="Mulliken J.B."/>
            <person name="Olsen B.R."/>
        </authorList>
    </citation>
    <scope>VARIANTS CMDD SER-375 DEL; PHE-376 DEL AND ALA-380 INS</scope>
</reference>
<reference key="11">
    <citation type="journal article" date="2001" name="Nat. Genet.">
        <title>Heterozygous mutations in ANKH, the human ortholog of the mouse progressive ankylosis gene, result in craniometaphyseal dysplasia.</title>
        <authorList>
            <person name="Nuernberg P."/>
            <person name="Thiele H."/>
            <person name="Chandler D."/>
            <person name="Hoehne W."/>
            <person name="Cunningham M.L."/>
            <person name="Ritter H."/>
            <person name="Leschik G."/>
            <person name="Uhlmann K."/>
            <person name="Mischung C."/>
            <person name="Harrop K."/>
            <person name="Goldblatt J."/>
            <person name="Borochowitz Z.U."/>
            <person name="Kotzot D."/>
            <person name="Westermann F."/>
            <person name="Mundlos S."/>
            <person name="Braun H.-S."/>
            <person name="Laing N."/>
            <person name="Tinschert S."/>
        </authorList>
    </citation>
    <scope>VARIANTS CMDD ARG-292; ARG-331; SER-375 DEL; PHE-377 DEL; ALA-380 INS AND ARG-389</scope>
</reference>
<reference key="12">
    <citation type="journal article" date="2002" name="Am. J. Hum. Genet.">
        <title>Mutations in ANKH cause chondrocalcinosis.</title>
        <authorList>
            <person name="Pendleton A."/>
            <person name="Johnson M.D."/>
            <person name="Hughes A."/>
            <person name="Gurley K.A."/>
            <person name="Ho A.M."/>
            <person name="Doherty M."/>
            <person name="Dixey J."/>
            <person name="Gillet P."/>
            <person name="Loeuille D."/>
            <person name="McGrath R."/>
            <person name="Reginato A."/>
            <person name="Shiang R."/>
            <person name="Wright G."/>
            <person name="Netter P."/>
            <person name="Williams C."/>
            <person name="Kingsley D.M."/>
        </authorList>
    </citation>
    <scope>VARIANTS CCAL2 THR-48 AND GLU-490 DEL</scope>
</reference>
<reference key="13">
    <citation type="journal article" date="2002" name="Am. J. Hum. Genet.">
        <title>Autosomal dominant familial calcium pyrophosphate dihydrate deposition disease is caused by mutation in the transmembrane protein ANKH.</title>
        <authorList>
            <person name="Williams C.J."/>
            <person name="Zhang Y."/>
            <person name="Timms A."/>
            <person name="Bonavita G."/>
            <person name="Caeiro F."/>
            <person name="Broxholme J."/>
            <person name="Cuthbertson J."/>
            <person name="Jones Y."/>
            <person name="Marchegiani R."/>
            <person name="Reginato A."/>
            <person name="Russell R.G.G."/>
            <person name="Wordsworth B.P."/>
            <person name="Carr A.J."/>
            <person name="Brown M.A."/>
        </authorList>
    </citation>
    <scope>VARIANT CCAL2 LEU-5</scope>
</reference>
<reference key="14">
    <citation type="journal article" date="2003" name="Arthritis Rheum.">
        <title>Mutations in the amino terminus of ANKH in two US families with calcium pyrophosphate dihydrate crystal deposition disease.</title>
        <authorList>
            <person name="Williams C.J."/>
            <person name="Pendleton A."/>
            <person name="Bonavita G."/>
            <person name="Reginato A.J."/>
            <person name="Hughes A.E."/>
            <person name="Peariso S."/>
            <person name="Doherty M."/>
            <person name="McCarty D.J."/>
            <person name="Ryan L.M."/>
        </authorList>
    </citation>
    <scope>VARIANT CCAL2 THR-5</scope>
</reference>
<reference key="15">
    <citation type="journal article" date="2011" name="J. Clin. Endocrinol. Metab.">
        <title>Autosomal recessive mental retardation, deafness, ankylosis, and mild hypophosphatemia associated with a novel ANKH mutation in a consanguineous family.</title>
        <authorList>
            <person name="Morava E."/>
            <person name="Kuehnisch J."/>
            <person name="Drijvers J.M."/>
            <person name="Robben J.H."/>
            <person name="Cremers C."/>
            <person name="van Setten P."/>
            <person name="Branten A."/>
            <person name="Stumpp S."/>
            <person name="de Jong A."/>
            <person name="Voesenek K."/>
            <person name="Vermeer S."/>
            <person name="Heister A."/>
            <person name="Claahsen-van der Grinten H.L."/>
            <person name="O'Neill C.W."/>
            <person name="Willemsen M.A."/>
            <person name="Lefeber D."/>
            <person name="Deen P.M."/>
            <person name="Kornak U."/>
            <person name="Kremer H."/>
            <person name="Wevers R.A."/>
        </authorList>
    </citation>
    <scope>VARIANT SER-244</scope>
    <scope>CHARACTERIZATION OF VARIANT SER-244</scope>
    <scope>FUNCTION</scope>
    <scope>SUBCELLULAR LOCATION</scope>
</reference>
<name>ANKH_HUMAN</name>
<keyword id="KW-0025">Alternative splicing</keyword>
<keyword id="KW-1003">Cell membrane</keyword>
<keyword id="KW-0209">Deafness</keyword>
<keyword id="KW-0225">Disease variant</keyword>
<keyword id="KW-0472">Membrane</keyword>
<keyword id="KW-1267">Proteomics identification</keyword>
<keyword id="KW-1185">Reference proteome</keyword>
<keyword id="KW-0812">Transmembrane</keyword>
<keyword id="KW-1133">Transmembrane helix</keyword>
<keyword id="KW-0813">Transport</keyword>
<comment type="function">
    <text evidence="8 9 10 15 16">Transports adenosine triphosphate (ATP) and possibly other nucleoside triphosphates (NTPs) from cytosol to the extracellular space. Mainly regulates their levels locally in peripheral tissues while playing a minor systemic role. Prevents abnormal ectopic mineralization of the joints by regulating the extracellular levels of the calcification inhibitor inorganic pyrophosphate (PPi), which originates from the conversion of extracellular NTPs to NMPs and PPis by ENPP1 (PubMed:20943778, PubMed:32639996, PubMed:35147247). Regulates the release of the TCA cycle intermediates to the extracellular space, in particular citrate, succinate and malate. Extracellular citrate mostly present in bone tissue is required for osteogenic differentiation of mesenchymal stem cells, stabilization of hydroxyapatite structure and overall bone strength (PubMed:32639996). The transport mechanism remains to be elucidated (Probable).</text>
</comment>
<comment type="catalytic activity">
    <reaction evidence="9 10">
        <text>ATP(in) = ATP(out)</text>
        <dbReference type="Rhea" id="RHEA:75687"/>
        <dbReference type="ChEBI" id="CHEBI:30616"/>
    </reaction>
    <physiologicalReaction direction="left-to-right" evidence="15 16">
        <dbReference type="Rhea" id="RHEA:75688"/>
    </physiologicalReaction>
</comment>
<comment type="catalytic activity">
    <reaction evidence="15">
        <text>citrate(in) = citrate(out)</text>
        <dbReference type="Rhea" id="RHEA:33183"/>
        <dbReference type="ChEBI" id="CHEBI:16947"/>
    </reaction>
    <physiologicalReaction direction="left-to-right" evidence="15">
        <dbReference type="Rhea" id="RHEA:33184"/>
    </physiologicalReaction>
</comment>
<comment type="subcellular location">
    <subcellularLocation>
        <location evidence="8">Cell membrane</location>
        <topology evidence="1">Multi-pass membrane protein</topology>
    </subcellularLocation>
</comment>
<comment type="alternative products">
    <event type="alternative splicing"/>
    <isoform>
        <id>Q9HCJ1-1</id>
        <name>1</name>
        <sequence type="displayed"/>
    </isoform>
    <isoform>
        <id>Q9HCJ1-2</id>
        <name>2</name>
        <sequence type="described" ref="VSP_055824"/>
    </isoform>
</comment>
<comment type="tissue specificity">
    <text>Found in osteoblasts from mandibular bone and from iliac bone; not detected in osteoclastic cells.</text>
</comment>
<comment type="disease" evidence="5 6 7">
    <disease id="DI-01342">
        <name>Chondrocalcinosis 2</name>
        <acronym>CCAL2</acronym>
        <description>Chondrocalcinosis is a common cause of joint pain and arthritis caused by calcium deposition in articular cartilage and the presence of calcium hypophosphate crystals in synovial fluid, cartilage and periarticular soft tissue. CCAL2 inheritance is autosomal dominant.</description>
        <dbReference type="MIM" id="118600"/>
    </disease>
    <text>The disease is caused by variants affecting the gene represented in this entry.</text>
</comment>
<comment type="disease" evidence="3 4">
    <disease id="DI-01445">
        <name>Craniometaphyseal dysplasia, autosomal dominant</name>
        <acronym>CMDD</acronym>
        <description>An osteochondrodysplasia characterized by hyperostosis and sclerosis of the craniofacial bones associated with abnormal modeling of the metaphyses. Sclerosis of the skull may lead to asymmetry of the mandible, as well as to cranial nerve compression, that may finally result in hearing loss and facial palsy.</description>
        <dbReference type="MIM" id="123000"/>
    </disease>
    <text>The disease is caused by variants affecting the gene represented in this entry.</text>
</comment>
<comment type="disease">
    <text evidence="8">A missense variant of ANKH cosegregates with a complex phenotype according to an autosomal recessive pattern. Affected homozygous individuals from a large consanguinous family show sensorineural and conductive hearing loss, intellectual disability, spinal ankylosis, and periarticular calcification of small joints. Only a mild arthropathy is observed in heterozygous individuals.</text>
</comment>
<comment type="similarity">
    <text evidence="14">Belongs to the ANKH family.</text>
</comment>
<comment type="sequence caution" evidence="14">
    <conflict type="erroneous initiation">
        <sequence resource="EMBL-CDS" id="BAB13407"/>
    </conflict>
</comment>
<organism>
    <name type="scientific">Homo sapiens</name>
    <name type="common">Human</name>
    <dbReference type="NCBI Taxonomy" id="9606"/>
    <lineage>
        <taxon>Eukaryota</taxon>
        <taxon>Metazoa</taxon>
        <taxon>Chordata</taxon>
        <taxon>Craniata</taxon>
        <taxon>Vertebrata</taxon>
        <taxon>Euteleostomi</taxon>
        <taxon>Mammalia</taxon>
        <taxon>Eutheria</taxon>
        <taxon>Euarchontoglires</taxon>
        <taxon>Primates</taxon>
        <taxon>Haplorrhini</taxon>
        <taxon>Catarrhini</taxon>
        <taxon>Hominidae</taxon>
        <taxon>Homo</taxon>
    </lineage>
</organism>
<proteinExistence type="evidence at protein level"/>
<feature type="chain" id="PRO_0000137467" description="Mineralization regulator ANKH">
    <location>
        <begin position="1"/>
        <end position="492"/>
    </location>
</feature>
<feature type="topological domain" description="Cytoplasmic" evidence="1">
    <location>
        <begin position="1"/>
        <end position="85"/>
    </location>
</feature>
<feature type="transmembrane region" description="Helical" evidence="1">
    <location>
        <begin position="86"/>
        <end position="106"/>
    </location>
</feature>
<feature type="topological domain" description="Extracellular" evidence="1">
    <location>
        <begin position="107"/>
        <end position="131"/>
    </location>
</feature>
<feature type="transmembrane region" description="Helical" evidence="1">
    <location>
        <begin position="132"/>
        <end position="152"/>
    </location>
</feature>
<feature type="topological domain" description="Cytoplasmic" evidence="1">
    <location>
        <begin position="153"/>
        <end position="158"/>
    </location>
</feature>
<feature type="transmembrane region" description="Helical" evidence="1">
    <location>
        <begin position="159"/>
        <end position="179"/>
    </location>
</feature>
<feature type="topological domain" description="Extracellular" evidence="1">
    <location>
        <begin position="180"/>
        <end position="189"/>
    </location>
</feature>
<feature type="transmembrane region" description="Helical" evidence="1">
    <location>
        <begin position="190"/>
        <end position="210"/>
    </location>
</feature>
<feature type="topological domain" description="Cytoplasmic" evidence="1">
    <location>
        <begin position="211"/>
        <end position="326"/>
    </location>
</feature>
<feature type="transmembrane region" description="Helical" evidence="1">
    <location>
        <begin position="327"/>
        <end position="347"/>
    </location>
</feature>
<feature type="topological domain" description="Extracellular" evidence="1">
    <location>
        <begin position="348"/>
        <end position="350"/>
    </location>
</feature>
<feature type="transmembrane region" description="Helical" evidence="1">
    <location>
        <begin position="351"/>
        <end position="371"/>
    </location>
</feature>
<feature type="topological domain" description="Cytoplasmic" evidence="1">
    <location>
        <begin position="372"/>
        <end position="403"/>
    </location>
</feature>
<feature type="transmembrane region" description="Helical" evidence="1">
    <location>
        <begin position="404"/>
        <end position="426"/>
    </location>
</feature>
<feature type="topological domain" description="Extracellular" evidence="1">
    <location>
        <begin position="427"/>
        <end position="429"/>
    </location>
</feature>
<feature type="transmembrane region" description="Helical" evidence="1">
    <location>
        <begin position="430"/>
        <end position="452"/>
    </location>
</feature>
<feature type="topological domain" description="Cytoplasmic" evidence="1">
    <location>
        <begin position="453"/>
        <end position="492"/>
    </location>
</feature>
<feature type="region of interest" description="Disordered" evidence="2">
    <location>
        <begin position="458"/>
        <end position="492"/>
    </location>
</feature>
<feature type="splice variant" id="VSP_055824" description="In isoform 2." evidence="12">
    <location>
        <begin position="1"/>
        <end position="198"/>
    </location>
</feature>
<feature type="sequence variant" id="VAR_022606" description="In CCAL2; dbSNP:rs121908409." evidence="6">
    <original>P</original>
    <variation>L</variation>
    <location>
        <position position="5"/>
    </location>
</feature>
<feature type="sequence variant" id="VAR_022607" description="In CCAL2; dbSNP:rs121908410." evidence="7">
    <original>P</original>
    <variation>T</variation>
    <location>
        <position position="5"/>
    </location>
</feature>
<feature type="sequence variant" id="VAR_017556" description="In CCAL2; dbSNP:rs121908407." evidence="5">
    <original>M</original>
    <variation>T</variation>
    <location>
        <position position="48"/>
    </location>
</feature>
<feature type="sequence variant" id="VAR_088435" description="Found in individuals of a consanguinous family with intellectual disability syndrome, deafness and ankylosis; likely pathogenic; localizes at the plasma membrane; loss-of-function." evidence="8 9 10">
    <original>L</original>
    <variation>S</variation>
    <location>
        <position position="244"/>
    </location>
</feature>
<feature type="sequence variant" id="VAR_012192" description="In CMDD." evidence="3">
    <original>W</original>
    <variation>R</variation>
    <location>
        <position position="292"/>
    </location>
</feature>
<feature type="sequence variant" id="VAR_012193" description="In CMDD." evidence="3">
    <original>C</original>
    <variation>R</variation>
    <location>
        <position position="331"/>
    </location>
</feature>
<feature type="sequence variant" id="VAR_012194" description="In CMDD." evidence="3 4">
    <location>
        <position position="375"/>
    </location>
</feature>
<feature type="sequence variant" id="VAR_012195" description="In CMDD." evidence="4">
    <location>
        <position position="376"/>
    </location>
</feature>
<feature type="sequence variant" id="VAR_012196" description="In CMDD; dbSNP:rs121908405." evidence="3">
    <location>
        <position position="377"/>
    </location>
</feature>
<feature type="sequence variant" id="VAR_012197" description="In CMDD." evidence="3 4">
    <original>P</original>
    <variation>PA</variation>
    <location>
        <position position="380"/>
    </location>
</feature>
<feature type="sequence variant" id="VAR_012198" description="In CMDD; dbSNP:rs28939080." evidence="3">
    <original>G</original>
    <variation>R</variation>
    <location>
        <position position="389"/>
    </location>
</feature>
<feature type="sequence variant" id="VAR_017557" description="In CCAL2; sporadic; dbSNP:rs121908408." evidence="5">
    <location>
        <position position="490"/>
    </location>
</feature>
<feature type="sequence conflict" description="In Ref. 1; AAF88039." evidence="14" ref="1">
    <original>N</original>
    <variation>S</variation>
    <location>
        <position position="78"/>
    </location>
</feature>